<reference key="1">
    <citation type="journal article" date="2007" name="PLoS Biol.">
        <title>Evolution of symbiotic bacteria in the distal human intestine.</title>
        <authorList>
            <person name="Xu J."/>
            <person name="Mahowald M.A."/>
            <person name="Ley R.E."/>
            <person name="Lozupone C.A."/>
            <person name="Hamady M."/>
            <person name="Martens E.C."/>
            <person name="Henrissat B."/>
            <person name="Coutinho P.M."/>
            <person name="Minx P."/>
            <person name="Latreille P."/>
            <person name="Cordum H."/>
            <person name="Van Brunt A."/>
            <person name="Kim K."/>
            <person name="Fulton R.S."/>
            <person name="Fulton L.A."/>
            <person name="Clifton S.W."/>
            <person name="Wilson R.K."/>
            <person name="Knight R.D."/>
            <person name="Gordon J.I."/>
        </authorList>
    </citation>
    <scope>NUCLEOTIDE SEQUENCE [LARGE SCALE GENOMIC DNA]</scope>
    <source>
        <strain>ATCC 8503 / DSM 20701 / CIP 104284 / JCM 5825 / NCTC 11152</strain>
    </source>
</reference>
<protein>
    <recommendedName>
        <fullName evidence="1">ATP-dependent zinc metalloprotease FtsH</fullName>
        <ecNumber evidence="1">3.4.24.-</ecNumber>
    </recommendedName>
</protein>
<proteinExistence type="inferred from homology"/>
<keyword id="KW-0067">ATP-binding</keyword>
<keyword id="KW-0997">Cell inner membrane</keyword>
<keyword id="KW-1003">Cell membrane</keyword>
<keyword id="KW-0378">Hydrolase</keyword>
<keyword id="KW-0472">Membrane</keyword>
<keyword id="KW-0479">Metal-binding</keyword>
<keyword id="KW-0482">Metalloprotease</keyword>
<keyword id="KW-0547">Nucleotide-binding</keyword>
<keyword id="KW-0645">Protease</keyword>
<keyword id="KW-1185">Reference proteome</keyword>
<keyword id="KW-0812">Transmembrane</keyword>
<keyword id="KW-1133">Transmembrane helix</keyword>
<keyword id="KW-0862">Zinc</keyword>
<sequence length="684" mass="76090">MENKNDMFNKTPKSGKPKMFRFNLYWMYGLIFIMLVALYMTNDSSGTKELGWTEFQKLAQENVFDKMTVYNKKNLVEATVKNGKTEQVFGNMDVSKIGVSPKVYVKIPSADKFSDFYDKAVADSHIDTQVRFEEGDDAIWNFLVSFGPIILLIGVWMFLMRRMSGGTGAGPGGVFSVGKAKAQLFDKDNDRKVTFKDVAGLAEAKQEVEEIVSFLKNPEKYTELGGKIPKGALLVGPPGTGKTLLAKAVAGEANVPFFSLSGSDFVEMFVGVGASRVRDLFRQAKEKSPCIVFIDEIDAVGRARGKNANMNSNDERENTLNQLLTEMDGFGSNSGVIILAATNRADILDKALLRAGRFDRQIHVELPDLNERKEIFGVHLRPIKIDESVDAEFLARQTPGFSGADIANVCNEAALIAARNGKKFVQKEDFMNAVDRIVGGLEKRSKITTEEERKCIANHEAGHATLSWLLEHANPLVKVTIVPRGKALGAAWYLPEERQITTREQLQDEMCATLGGRAAEELVLGKISTGASNDLERVTKQAYAMVVYFGMSDKLPNLNYYDSTGQDWGFTKPYSEETAKLIDTEVQKIINEQYDRAKRILSENKEGHSKLAQVLLDREVIYSEDVEHIFGKRAWISRSQEILELQEKANGKNKENADKEAEADATTENVTDTPTEENKTGKIA</sequence>
<evidence type="ECO:0000255" key="1">
    <source>
        <dbReference type="HAMAP-Rule" id="MF_01458"/>
    </source>
</evidence>
<evidence type="ECO:0000256" key="2">
    <source>
        <dbReference type="SAM" id="MobiDB-lite"/>
    </source>
</evidence>
<gene>
    <name evidence="1" type="primary">ftsH</name>
    <name type="ordered locus">BDI_1854</name>
</gene>
<organism>
    <name type="scientific">Parabacteroides distasonis (strain ATCC 8503 / DSM 20701 / CIP 104284 / JCM 5825 / NCTC 11152)</name>
    <dbReference type="NCBI Taxonomy" id="435591"/>
    <lineage>
        <taxon>Bacteria</taxon>
        <taxon>Pseudomonadati</taxon>
        <taxon>Bacteroidota</taxon>
        <taxon>Bacteroidia</taxon>
        <taxon>Bacteroidales</taxon>
        <taxon>Tannerellaceae</taxon>
        <taxon>Parabacteroides</taxon>
    </lineage>
</organism>
<comment type="function">
    <text evidence="1">Acts as a processive, ATP-dependent zinc metallopeptidase for both cytoplasmic and membrane proteins. Plays a role in the quality control of integral membrane proteins.</text>
</comment>
<comment type="cofactor">
    <cofactor evidence="1">
        <name>Zn(2+)</name>
        <dbReference type="ChEBI" id="CHEBI:29105"/>
    </cofactor>
    <text evidence="1">Binds 1 zinc ion per subunit.</text>
</comment>
<comment type="subunit">
    <text evidence="1">Homohexamer.</text>
</comment>
<comment type="subcellular location">
    <subcellularLocation>
        <location evidence="1">Cell inner membrane</location>
        <topology evidence="1">Multi-pass membrane protein</topology>
        <orientation evidence="1">Cytoplasmic side</orientation>
    </subcellularLocation>
</comment>
<comment type="similarity">
    <text evidence="1">In the central section; belongs to the AAA ATPase family.</text>
</comment>
<comment type="similarity">
    <text evidence="1">In the C-terminal section; belongs to the peptidase M41 family.</text>
</comment>
<feature type="chain" id="PRO_0000400367" description="ATP-dependent zinc metalloprotease FtsH">
    <location>
        <begin position="1"/>
        <end position="684"/>
    </location>
</feature>
<feature type="topological domain" description="Cytoplasmic" evidence="1">
    <location>
        <begin position="1"/>
        <end position="21"/>
    </location>
</feature>
<feature type="transmembrane region" description="Helical" evidence="1">
    <location>
        <begin position="22"/>
        <end position="42"/>
    </location>
</feature>
<feature type="topological domain" description="Periplasmic" evidence="1">
    <location>
        <begin position="43"/>
        <end position="138"/>
    </location>
</feature>
<feature type="transmembrane region" description="Helical" evidence="1">
    <location>
        <begin position="139"/>
        <end position="159"/>
    </location>
</feature>
<feature type="topological domain" description="Cytoplasmic" evidence="1">
    <location>
        <begin position="160"/>
        <end position="684"/>
    </location>
</feature>
<feature type="region of interest" description="Disordered" evidence="2">
    <location>
        <begin position="647"/>
        <end position="684"/>
    </location>
</feature>
<feature type="compositionally biased region" description="Basic and acidic residues" evidence="2">
    <location>
        <begin position="647"/>
        <end position="662"/>
    </location>
</feature>
<feature type="active site" evidence="1">
    <location>
        <position position="460"/>
    </location>
</feature>
<feature type="binding site" evidence="1">
    <location>
        <begin position="236"/>
        <end position="243"/>
    </location>
    <ligand>
        <name>ATP</name>
        <dbReference type="ChEBI" id="CHEBI:30616"/>
    </ligand>
</feature>
<feature type="binding site" evidence="1">
    <location>
        <position position="459"/>
    </location>
    <ligand>
        <name>Zn(2+)</name>
        <dbReference type="ChEBI" id="CHEBI:29105"/>
        <note>catalytic</note>
    </ligand>
</feature>
<feature type="binding site" evidence="1">
    <location>
        <position position="463"/>
    </location>
    <ligand>
        <name>Zn(2+)</name>
        <dbReference type="ChEBI" id="CHEBI:29105"/>
        <note>catalytic</note>
    </ligand>
</feature>
<feature type="binding site" evidence="1">
    <location>
        <position position="534"/>
    </location>
    <ligand>
        <name>Zn(2+)</name>
        <dbReference type="ChEBI" id="CHEBI:29105"/>
        <note>catalytic</note>
    </ligand>
</feature>
<dbReference type="EC" id="3.4.24.-" evidence="1"/>
<dbReference type="EMBL" id="CP000140">
    <property type="protein sequence ID" value="ABR43589.1"/>
    <property type="molecule type" value="Genomic_DNA"/>
</dbReference>
<dbReference type="RefSeq" id="WP_005854893.1">
    <property type="nucleotide sequence ID" value="NC_009615.1"/>
</dbReference>
<dbReference type="SMR" id="A6LD25"/>
<dbReference type="STRING" id="435591.BDI_1854"/>
<dbReference type="MEROPS" id="M41.A17"/>
<dbReference type="PaxDb" id="435591-BDI_1854"/>
<dbReference type="KEGG" id="pdi:BDI_1854"/>
<dbReference type="eggNOG" id="COG0465">
    <property type="taxonomic scope" value="Bacteria"/>
</dbReference>
<dbReference type="HOGENOM" id="CLU_000688_16_2_10"/>
<dbReference type="BioCyc" id="PDIS435591:G1G5A-1906-MONOMER"/>
<dbReference type="Proteomes" id="UP000000566">
    <property type="component" value="Chromosome"/>
</dbReference>
<dbReference type="GO" id="GO:0005886">
    <property type="term" value="C:plasma membrane"/>
    <property type="evidence" value="ECO:0007669"/>
    <property type="project" value="UniProtKB-SubCell"/>
</dbReference>
<dbReference type="GO" id="GO:0005524">
    <property type="term" value="F:ATP binding"/>
    <property type="evidence" value="ECO:0007669"/>
    <property type="project" value="UniProtKB-UniRule"/>
</dbReference>
<dbReference type="GO" id="GO:0016887">
    <property type="term" value="F:ATP hydrolysis activity"/>
    <property type="evidence" value="ECO:0007669"/>
    <property type="project" value="UniProtKB-UniRule"/>
</dbReference>
<dbReference type="GO" id="GO:0004176">
    <property type="term" value="F:ATP-dependent peptidase activity"/>
    <property type="evidence" value="ECO:0007669"/>
    <property type="project" value="InterPro"/>
</dbReference>
<dbReference type="GO" id="GO:0004222">
    <property type="term" value="F:metalloendopeptidase activity"/>
    <property type="evidence" value="ECO:0007669"/>
    <property type="project" value="InterPro"/>
</dbReference>
<dbReference type="GO" id="GO:0008270">
    <property type="term" value="F:zinc ion binding"/>
    <property type="evidence" value="ECO:0007669"/>
    <property type="project" value="UniProtKB-UniRule"/>
</dbReference>
<dbReference type="GO" id="GO:0030163">
    <property type="term" value="P:protein catabolic process"/>
    <property type="evidence" value="ECO:0007669"/>
    <property type="project" value="UniProtKB-UniRule"/>
</dbReference>
<dbReference type="GO" id="GO:0006508">
    <property type="term" value="P:proteolysis"/>
    <property type="evidence" value="ECO:0007669"/>
    <property type="project" value="UniProtKB-KW"/>
</dbReference>
<dbReference type="CDD" id="cd19501">
    <property type="entry name" value="RecA-like_FtsH"/>
    <property type="match status" value="1"/>
</dbReference>
<dbReference type="FunFam" id="1.20.58.760:FF:000003">
    <property type="entry name" value="AFG3-like AAA ATPase 2"/>
    <property type="match status" value="1"/>
</dbReference>
<dbReference type="FunFam" id="1.10.8.60:FF:000001">
    <property type="entry name" value="ATP-dependent zinc metalloprotease FtsH"/>
    <property type="match status" value="1"/>
</dbReference>
<dbReference type="FunFam" id="3.40.50.300:FF:000001">
    <property type="entry name" value="ATP-dependent zinc metalloprotease FtsH"/>
    <property type="match status" value="1"/>
</dbReference>
<dbReference type="Gene3D" id="1.10.8.60">
    <property type="match status" value="1"/>
</dbReference>
<dbReference type="Gene3D" id="3.40.1690.20">
    <property type="match status" value="1"/>
</dbReference>
<dbReference type="Gene3D" id="3.40.50.300">
    <property type="entry name" value="P-loop containing nucleotide triphosphate hydrolases"/>
    <property type="match status" value="1"/>
</dbReference>
<dbReference type="Gene3D" id="1.20.58.760">
    <property type="entry name" value="Peptidase M41"/>
    <property type="match status" value="1"/>
</dbReference>
<dbReference type="HAMAP" id="MF_01458">
    <property type="entry name" value="FtsH"/>
    <property type="match status" value="1"/>
</dbReference>
<dbReference type="InterPro" id="IPR003593">
    <property type="entry name" value="AAA+_ATPase"/>
</dbReference>
<dbReference type="InterPro" id="IPR041569">
    <property type="entry name" value="AAA_lid_3"/>
</dbReference>
<dbReference type="InterPro" id="IPR050928">
    <property type="entry name" value="ATP-dep_Zn_Metalloprotease"/>
</dbReference>
<dbReference type="InterPro" id="IPR003959">
    <property type="entry name" value="ATPase_AAA_core"/>
</dbReference>
<dbReference type="InterPro" id="IPR003960">
    <property type="entry name" value="ATPase_AAA_CS"/>
</dbReference>
<dbReference type="InterPro" id="IPR018247">
    <property type="entry name" value="EF_Hand_1_Ca_BS"/>
</dbReference>
<dbReference type="InterPro" id="IPR005936">
    <property type="entry name" value="FtsH"/>
</dbReference>
<dbReference type="InterPro" id="IPR027417">
    <property type="entry name" value="P-loop_NTPase"/>
</dbReference>
<dbReference type="InterPro" id="IPR011546">
    <property type="entry name" value="Pept_M41_FtsH_extracell"/>
</dbReference>
<dbReference type="InterPro" id="IPR000642">
    <property type="entry name" value="Peptidase_M41"/>
</dbReference>
<dbReference type="InterPro" id="IPR037219">
    <property type="entry name" value="Peptidase_M41-like"/>
</dbReference>
<dbReference type="NCBIfam" id="TIGR01241">
    <property type="entry name" value="FtsH_fam"/>
    <property type="match status" value="1"/>
</dbReference>
<dbReference type="PANTHER" id="PTHR43655:SF2">
    <property type="entry name" value="AFG3 LIKE MATRIX AAA PEPTIDASE SUBUNIT 2, ISOFORM A"/>
    <property type="match status" value="1"/>
</dbReference>
<dbReference type="PANTHER" id="PTHR43655">
    <property type="entry name" value="ATP-DEPENDENT PROTEASE"/>
    <property type="match status" value="1"/>
</dbReference>
<dbReference type="Pfam" id="PF00004">
    <property type="entry name" value="AAA"/>
    <property type="match status" value="1"/>
</dbReference>
<dbReference type="Pfam" id="PF17862">
    <property type="entry name" value="AAA_lid_3"/>
    <property type="match status" value="1"/>
</dbReference>
<dbReference type="Pfam" id="PF06480">
    <property type="entry name" value="FtsH_ext"/>
    <property type="match status" value="1"/>
</dbReference>
<dbReference type="Pfam" id="PF01434">
    <property type="entry name" value="Peptidase_M41"/>
    <property type="match status" value="1"/>
</dbReference>
<dbReference type="SMART" id="SM00382">
    <property type="entry name" value="AAA"/>
    <property type="match status" value="1"/>
</dbReference>
<dbReference type="SUPFAM" id="SSF140990">
    <property type="entry name" value="FtsH protease domain-like"/>
    <property type="match status" value="1"/>
</dbReference>
<dbReference type="SUPFAM" id="SSF52540">
    <property type="entry name" value="P-loop containing nucleoside triphosphate hydrolases"/>
    <property type="match status" value="1"/>
</dbReference>
<dbReference type="PROSITE" id="PS00674">
    <property type="entry name" value="AAA"/>
    <property type="match status" value="1"/>
</dbReference>
<accession>A6LD25</accession>
<name>FTSH_PARD8</name>